<keyword id="KW-0687">Ribonucleoprotein</keyword>
<keyword id="KW-0689">Ribosomal protein</keyword>
<reference key="1">
    <citation type="journal article" date="2011" name="J. Bacteriol.">
        <title>Comparative genomics of 28 Salmonella enterica isolates: evidence for CRISPR-mediated adaptive sublineage evolution.</title>
        <authorList>
            <person name="Fricke W.F."/>
            <person name="Mammel M.K."/>
            <person name="McDermott P.F."/>
            <person name="Tartera C."/>
            <person name="White D.G."/>
            <person name="Leclerc J.E."/>
            <person name="Ravel J."/>
            <person name="Cebula T.A."/>
        </authorList>
    </citation>
    <scope>NUCLEOTIDE SEQUENCE [LARGE SCALE GENOMIC DNA]</scope>
    <source>
        <strain>CVM19633</strain>
    </source>
</reference>
<sequence>MQVLNSLRNAKQRHPDCQIVKRKGRLYVICKTNPRFKAVQGRKKRR</sequence>
<protein>
    <recommendedName>
        <fullName evidence="1">Large ribosomal subunit protein bL36</fullName>
    </recommendedName>
    <alternativeName>
        <fullName evidence="2">50S ribosomal protein L36</fullName>
    </alternativeName>
</protein>
<comment type="similarity">
    <text evidence="1">Belongs to the bacterial ribosomal protein bL36 family.</text>
</comment>
<evidence type="ECO:0000255" key="1">
    <source>
        <dbReference type="HAMAP-Rule" id="MF_00251"/>
    </source>
</evidence>
<evidence type="ECO:0000305" key="2"/>
<proteinExistence type="inferred from homology"/>
<gene>
    <name evidence="1" type="primary">rpmJ</name>
    <name type="ordered locus">SeSA_A0530</name>
</gene>
<feature type="chain" id="PRO_1000101069" description="Large ribosomal subunit protein bL36">
    <location>
        <begin position="1"/>
        <end position="46"/>
    </location>
</feature>
<name>RL36_SALSV</name>
<organism>
    <name type="scientific">Salmonella schwarzengrund (strain CVM19633)</name>
    <dbReference type="NCBI Taxonomy" id="439843"/>
    <lineage>
        <taxon>Bacteria</taxon>
        <taxon>Pseudomonadati</taxon>
        <taxon>Pseudomonadota</taxon>
        <taxon>Gammaproteobacteria</taxon>
        <taxon>Enterobacterales</taxon>
        <taxon>Enterobacteriaceae</taxon>
        <taxon>Salmonella</taxon>
    </lineage>
</organism>
<dbReference type="EMBL" id="CP001127">
    <property type="protein sequence ID" value="ACF92453.1"/>
    <property type="molecule type" value="Genomic_DNA"/>
</dbReference>
<dbReference type="SMR" id="B4TME8"/>
<dbReference type="KEGG" id="sew:SeSA_A0530"/>
<dbReference type="HOGENOM" id="CLU_135723_3_1_6"/>
<dbReference type="Proteomes" id="UP000001865">
    <property type="component" value="Chromosome"/>
</dbReference>
<dbReference type="GO" id="GO:1990904">
    <property type="term" value="C:ribonucleoprotein complex"/>
    <property type="evidence" value="ECO:0007669"/>
    <property type="project" value="UniProtKB-KW"/>
</dbReference>
<dbReference type="GO" id="GO:0005840">
    <property type="term" value="C:ribosome"/>
    <property type="evidence" value="ECO:0007669"/>
    <property type="project" value="UniProtKB-KW"/>
</dbReference>
<dbReference type="GO" id="GO:0003735">
    <property type="term" value="F:structural constituent of ribosome"/>
    <property type="evidence" value="ECO:0007669"/>
    <property type="project" value="InterPro"/>
</dbReference>
<dbReference type="GO" id="GO:0006412">
    <property type="term" value="P:translation"/>
    <property type="evidence" value="ECO:0007669"/>
    <property type="project" value="UniProtKB-UniRule"/>
</dbReference>
<dbReference type="HAMAP" id="MF_00251">
    <property type="entry name" value="Ribosomal_bL36"/>
    <property type="match status" value="1"/>
</dbReference>
<dbReference type="InterPro" id="IPR000473">
    <property type="entry name" value="Ribosomal_bL36"/>
</dbReference>
<dbReference type="InterPro" id="IPR035977">
    <property type="entry name" value="Ribosomal_bL36_sp"/>
</dbReference>
<dbReference type="InterPro" id="IPR047621">
    <property type="entry name" value="Ribosomal_L36_bact"/>
</dbReference>
<dbReference type="NCBIfam" id="NF002021">
    <property type="entry name" value="PRK00831.1"/>
    <property type="match status" value="1"/>
</dbReference>
<dbReference type="NCBIfam" id="TIGR01022">
    <property type="entry name" value="rpmJ_bact"/>
    <property type="match status" value="1"/>
</dbReference>
<dbReference type="PANTHER" id="PTHR47781">
    <property type="entry name" value="50S RIBOSOMAL PROTEIN L36 2"/>
    <property type="match status" value="1"/>
</dbReference>
<dbReference type="PANTHER" id="PTHR47781:SF1">
    <property type="entry name" value="LARGE RIBOSOMAL SUBUNIT PROTEIN BL36B"/>
    <property type="match status" value="1"/>
</dbReference>
<dbReference type="Pfam" id="PF00444">
    <property type="entry name" value="Ribosomal_L36"/>
    <property type="match status" value="1"/>
</dbReference>
<dbReference type="SUPFAM" id="SSF57840">
    <property type="entry name" value="Ribosomal protein L36"/>
    <property type="match status" value="1"/>
</dbReference>
<dbReference type="PROSITE" id="PS00828">
    <property type="entry name" value="RIBOSOMAL_L36"/>
    <property type="match status" value="1"/>
</dbReference>
<accession>B4TME8</accession>